<name>RS27A_SULAC</name>
<comment type="cofactor">
    <cofactor evidence="1">
        <name>Zn(2+)</name>
        <dbReference type="ChEBI" id="CHEBI:29105"/>
    </cofactor>
    <text evidence="1">Binds 1 zinc ion per subunit.</text>
</comment>
<comment type="subunit">
    <text evidence="1">Part of the 30S ribosomal subunit.</text>
</comment>
<comment type="similarity">
    <text evidence="1">Belongs to the eukaryotic ribosomal protein eS31 family.</text>
</comment>
<proteinExistence type="evidence at protein level"/>
<gene>
    <name evidence="1" type="primary">rps27ae</name>
    <name type="ordered locus">Saci_0852</name>
</gene>
<accession>Q4JAG0</accession>
<protein>
    <recommendedName>
        <fullName evidence="1">Small ribosomal subunit protein eS31</fullName>
    </recommendedName>
    <alternativeName>
        <fullName evidence="2">30S ribosomal protein S27ae</fullName>
    </alternativeName>
</protein>
<feature type="chain" id="PRO_0000137706" description="Small ribosomal subunit protein eS31">
    <location>
        <begin position="1"/>
        <end position="67"/>
    </location>
</feature>
<feature type="zinc finger region" description="C4-type" evidence="1">
    <location>
        <begin position="35"/>
        <end position="57"/>
    </location>
</feature>
<feature type="binding site" evidence="1">
    <location>
        <position position="35"/>
    </location>
    <ligand>
        <name>Zn(2+)</name>
        <dbReference type="ChEBI" id="CHEBI:29105"/>
    </ligand>
</feature>
<feature type="binding site" evidence="1">
    <location>
        <position position="38"/>
    </location>
    <ligand>
        <name>Zn(2+)</name>
        <dbReference type="ChEBI" id="CHEBI:29105"/>
    </ligand>
</feature>
<feature type="binding site" evidence="1">
    <location>
        <position position="54"/>
    </location>
    <ligand>
        <name>Zn(2+)</name>
        <dbReference type="ChEBI" id="CHEBI:29105"/>
    </ligand>
</feature>
<feature type="binding site" evidence="1">
    <location>
        <position position="57"/>
    </location>
    <ligand>
        <name>Zn(2+)</name>
        <dbReference type="ChEBI" id="CHEBI:29105"/>
    </ligand>
</feature>
<keyword id="KW-0002">3D-structure</keyword>
<keyword id="KW-0479">Metal-binding</keyword>
<keyword id="KW-1185">Reference proteome</keyword>
<keyword id="KW-0687">Ribonucleoprotein</keyword>
<keyword id="KW-0689">Ribosomal protein</keyword>
<keyword id="KW-0862">Zinc</keyword>
<keyword id="KW-0863">Zinc-finger</keyword>
<evidence type="ECO:0000255" key="1">
    <source>
        <dbReference type="HAMAP-Rule" id="MF_00777"/>
    </source>
</evidence>
<evidence type="ECO:0000305" key="2"/>
<dbReference type="EMBL" id="CP000077">
    <property type="protein sequence ID" value="AAY80219.1"/>
    <property type="molecule type" value="Genomic_DNA"/>
</dbReference>
<dbReference type="RefSeq" id="WP_011277721.1">
    <property type="nucleotide sequence ID" value="NC_007181.1"/>
</dbReference>
<dbReference type="PDB" id="8HKX">
    <property type="method" value="EM"/>
    <property type="resolution" value="3.14 A"/>
    <property type="chains" value="S27A=12-65"/>
</dbReference>
<dbReference type="PDB" id="8HKY">
    <property type="method" value="EM"/>
    <property type="resolution" value="4.45 A"/>
    <property type="chains" value="S27A=12-65"/>
</dbReference>
<dbReference type="PDB" id="8HKZ">
    <property type="method" value="EM"/>
    <property type="resolution" value="4.78 A"/>
    <property type="chains" value="S27A=12-65"/>
</dbReference>
<dbReference type="PDB" id="8HL1">
    <property type="method" value="EM"/>
    <property type="resolution" value="3.93 A"/>
    <property type="chains" value="S27A=12-65"/>
</dbReference>
<dbReference type="PDB" id="8HL2">
    <property type="method" value="EM"/>
    <property type="resolution" value="4.10 A"/>
    <property type="chains" value="S27A=12-65"/>
</dbReference>
<dbReference type="PDB" id="8HL3">
    <property type="method" value="EM"/>
    <property type="resolution" value="4.80 A"/>
    <property type="chains" value="S27A=12-65"/>
</dbReference>
<dbReference type="PDB" id="8HL4">
    <property type="method" value="EM"/>
    <property type="resolution" value="4.62 A"/>
    <property type="chains" value="S27A=12-65"/>
</dbReference>
<dbReference type="PDB" id="8HL5">
    <property type="method" value="EM"/>
    <property type="resolution" value="5.72 A"/>
    <property type="chains" value="S27A=12-65"/>
</dbReference>
<dbReference type="PDB" id="8WKP">
    <property type="method" value="EM"/>
    <property type="resolution" value="4.62 A"/>
    <property type="chains" value="S27A=12-65"/>
</dbReference>
<dbReference type="PDB" id="8WQ2">
    <property type="method" value="EM"/>
    <property type="resolution" value="4.10 A"/>
    <property type="chains" value="S27A=12-65"/>
</dbReference>
<dbReference type="PDB" id="8WQ4">
    <property type="method" value="EM"/>
    <property type="resolution" value="4.53 A"/>
    <property type="chains" value="S27A=12-65"/>
</dbReference>
<dbReference type="PDBsum" id="8HKX"/>
<dbReference type="PDBsum" id="8HKY"/>
<dbReference type="PDBsum" id="8HKZ"/>
<dbReference type="PDBsum" id="8HL1"/>
<dbReference type="PDBsum" id="8HL2"/>
<dbReference type="PDBsum" id="8HL3"/>
<dbReference type="PDBsum" id="8HL4"/>
<dbReference type="PDBsum" id="8HL5"/>
<dbReference type="PDBsum" id="8WKP"/>
<dbReference type="PDBsum" id="8WQ2"/>
<dbReference type="PDBsum" id="8WQ4"/>
<dbReference type="EMDB" id="EMD-34862"/>
<dbReference type="EMDB" id="EMD-34863"/>
<dbReference type="EMDB" id="EMD-34864"/>
<dbReference type="EMDB" id="EMD-34866"/>
<dbReference type="EMDB" id="EMD-34867"/>
<dbReference type="EMDB" id="EMD-34868"/>
<dbReference type="EMDB" id="EMD-34869"/>
<dbReference type="EMDB" id="EMD-34870"/>
<dbReference type="EMDB" id="EMD-37604"/>
<dbReference type="EMDB" id="EMD-37733"/>
<dbReference type="EMDB" id="EMD-37734"/>
<dbReference type="SMR" id="Q4JAG0"/>
<dbReference type="STRING" id="330779.Saci_0852"/>
<dbReference type="GeneID" id="31536143"/>
<dbReference type="KEGG" id="sai:Saci_0852"/>
<dbReference type="eggNOG" id="arCOG04183">
    <property type="taxonomic scope" value="Archaea"/>
</dbReference>
<dbReference type="HOGENOM" id="CLU_179743_1_0_2"/>
<dbReference type="Proteomes" id="UP000001018">
    <property type="component" value="Chromosome"/>
</dbReference>
<dbReference type="GO" id="GO:1990904">
    <property type="term" value="C:ribonucleoprotein complex"/>
    <property type="evidence" value="ECO:0007669"/>
    <property type="project" value="UniProtKB-KW"/>
</dbReference>
<dbReference type="GO" id="GO:0005840">
    <property type="term" value="C:ribosome"/>
    <property type="evidence" value="ECO:0007669"/>
    <property type="project" value="UniProtKB-KW"/>
</dbReference>
<dbReference type="GO" id="GO:0003735">
    <property type="term" value="F:structural constituent of ribosome"/>
    <property type="evidence" value="ECO:0007669"/>
    <property type="project" value="InterPro"/>
</dbReference>
<dbReference type="GO" id="GO:0008270">
    <property type="term" value="F:zinc ion binding"/>
    <property type="evidence" value="ECO:0007669"/>
    <property type="project" value="UniProtKB-UniRule"/>
</dbReference>
<dbReference type="GO" id="GO:0006412">
    <property type="term" value="P:translation"/>
    <property type="evidence" value="ECO:0007669"/>
    <property type="project" value="UniProtKB-UniRule"/>
</dbReference>
<dbReference type="Gene3D" id="6.20.50.180">
    <property type="match status" value="1"/>
</dbReference>
<dbReference type="HAMAP" id="MF_00777">
    <property type="entry name" value="Ribosomal_eS31"/>
    <property type="match status" value="1"/>
</dbReference>
<dbReference type="InterPro" id="IPR002906">
    <property type="entry name" value="Ribosomal_eS31"/>
</dbReference>
<dbReference type="InterPro" id="IPR022845">
    <property type="entry name" value="Ribosomal_eS31_arc"/>
</dbReference>
<dbReference type="InterPro" id="IPR011332">
    <property type="entry name" value="Ribosomal_zn-bd"/>
</dbReference>
<dbReference type="NCBIfam" id="NF001669">
    <property type="entry name" value="PRK00432.1"/>
    <property type="match status" value="1"/>
</dbReference>
<dbReference type="Pfam" id="PF01599">
    <property type="entry name" value="Ribosomal_S27"/>
    <property type="match status" value="1"/>
</dbReference>
<dbReference type="SMART" id="SM01402">
    <property type="entry name" value="Ribosomal_S27"/>
    <property type="match status" value="1"/>
</dbReference>
<dbReference type="SUPFAM" id="SSF57829">
    <property type="entry name" value="Zn-binding ribosomal proteins"/>
    <property type="match status" value="1"/>
</dbReference>
<organism>
    <name type="scientific">Sulfolobus acidocaldarius (strain ATCC 33909 / DSM 639 / JCM 8929 / NBRC 15157 / NCIMB 11770)</name>
    <dbReference type="NCBI Taxonomy" id="330779"/>
    <lineage>
        <taxon>Archaea</taxon>
        <taxon>Thermoproteota</taxon>
        <taxon>Thermoprotei</taxon>
        <taxon>Sulfolobales</taxon>
        <taxon>Sulfolobaceae</taxon>
        <taxon>Sulfolobus</taxon>
    </lineage>
</organism>
<sequence>MVRVPKNNNENQSKAVVRTYYEVEQDSIKLKNKKCPRCGSIMAHHMKPLERWACGKCGYTEFIGKSR</sequence>
<reference key="1">
    <citation type="journal article" date="2005" name="J. Bacteriol.">
        <title>The genome of Sulfolobus acidocaldarius, a model organism of the Crenarchaeota.</title>
        <authorList>
            <person name="Chen L."/>
            <person name="Bruegger K."/>
            <person name="Skovgaard M."/>
            <person name="Redder P."/>
            <person name="She Q."/>
            <person name="Torarinsson E."/>
            <person name="Greve B."/>
            <person name="Awayez M."/>
            <person name="Zibat A."/>
            <person name="Klenk H.-P."/>
            <person name="Garrett R.A."/>
        </authorList>
    </citation>
    <scope>NUCLEOTIDE SEQUENCE [LARGE SCALE GENOMIC DNA]</scope>
    <source>
        <strain>ATCC 33909 / DSM 639 / JCM 8929 / NBRC 15157 / NCIMB 11770</strain>
    </source>
</reference>